<gene>
    <name evidence="1" type="primary">ftsH</name>
    <name type="ordered locus">Amuc_0348</name>
</gene>
<sequence length="812" mass="89455">MPPSPPRPPKFPGSGRPESPNWGVWVMVLLIVGVLAFGFFTPESFGLGPRKENLESFEAQYKAGRVVLNDPKAPVEVVLSENGSEGVIHALVYRKEIQPKVEMTPFALTYSMSLPDRDKPLLNELSGYRVVESPYRTEEGKNVSLIPEGAQKLSVPEFNRLALEGRIAGGKDGIILAEDGNQNVLVGQIVTRIWPAATGDASVDKQRFERVEVPFTLEFQGDRVKQLLGPDTKFKRESGSWGGILLNLLPIVLILVILFFMFRAQSGGARGAMSFGKSRARLISPDKNKVTFKDVAGISEAKEEVWELVEFLRNPEKFRDLGATIPRGVLMVGAPGTGKTLLARAIAGESNASFYSISGSDFVEMFVGVGASRVRDMFEQAKRTAPSLIFIDEIDAVGRQRGYGMGGGNDEREQTLNALLVEMDGFENNSNVIVIAATNRADILDPALLRPGRFDRQVVVNLPDVRGREQILQVHARKVKMAPGVSFERIARGTSGFSGAQLANLVNEAALLAARKGLKEITEAELEEARDKVSWGRERRSLAINERGRRITAVHEAGHAICLLKTPHSEPLHRVTIVPRGGALGMTMWLPSDDKMHQLRSEMLDQLVVAMGGRCAEQIVFGDVTSGATGDIKSATNLARRMVCEFGMSEKLGLIEYGEHQGEVYIARDLGTRSRNYSESTAELIDSEVRFLVDSAYERAMAILTENRDKLDILTEALMEFETLEGSQVMDILEYGEMKNPPARVTPPPMPSEVEEQPGKDDSGHNEKKEAEETRADGAEERKMEEELEQAERAPFSYNPVDEFGKDGGEKK</sequence>
<protein>
    <recommendedName>
        <fullName evidence="1">ATP-dependent zinc metalloprotease FtsH</fullName>
        <ecNumber evidence="1">3.4.24.-</ecNumber>
    </recommendedName>
</protein>
<proteinExistence type="inferred from homology"/>
<accession>B2UMY1</accession>
<keyword id="KW-0067">ATP-binding</keyword>
<keyword id="KW-1003">Cell membrane</keyword>
<keyword id="KW-0378">Hydrolase</keyword>
<keyword id="KW-0472">Membrane</keyword>
<keyword id="KW-0479">Metal-binding</keyword>
<keyword id="KW-0482">Metalloprotease</keyword>
<keyword id="KW-0547">Nucleotide-binding</keyword>
<keyword id="KW-0645">Protease</keyword>
<keyword id="KW-1185">Reference proteome</keyword>
<keyword id="KW-0812">Transmembrane</keyword>
<keyword id="KW-1133">Transmembrane helix</keyword>
<keyword id="KW-0862">Zinc</keyword>
<feature type="chain" id="PRO_0000400321" description="ATP-dependent zinc metalloprotease FtsH">
    <location>
        <begin position="1"/>
        <end position="812"/>
    </location>
</feature>
<feature type="topological domain" description="Cytoplasmic" evidence="1">
    <location>
        <begin position="1"/>
        <end position="21"/>
    </location>
</feature>
<feature type="transmembrane region" description="Helical" evidence="1">
    <location>
        <begin position="22"/>
        <end position="42"/>
    </location>
</feature>
<feature type="topological domain" description="Extracellular" evidence="1">
    <location>
        <begin position="43"/>
        <end position="241"/>
    </location>
</feature>
<feature type="transmembrane region" description="Helical" evidence="1">
    <location>
        <begin position="242"/>
        <end position="262"/>
    </location>
</feature>
<feature type="topological domain" description="Cytoplasmic" evidence="1">
    <location>
        <begin position="263"/>
        <end position="812"/>
    </location>
</feature>
<feature type="region of interest" description="Disordered" evidence="2">
    <location>
        <begin position="739"/>
        <end position="812"/>
    </location>
</feature>
<feature type="compositionally biased region" description="Basic and acidic residues" evidence="2">
    <location>
        <begin position="757"/>
        <end position="785"/>
    </location>
</feature>
<feature type="compositionally biased region" description="Basic and acidic residues" evidence="2">
    <location>
        <begin position="803"/>
        <end position="812"/>
    </location>
</feature>
<feature type="active site" evidence="1">
    <location>
        <position position="556"/>
    </location>
</feature>
<feature type="binding site" evidence="1">
    <location>
        <begin position="333"/>
        <end position="340"/>
    </location>
    <ligand>
        <name>ATP</name>
        <dbReference type="ChEBI" id="CHEBI:30616"/>
    </ligand>
</feature>
<feature type="binding site" evidence="1">
    <location>
        <position position="555"/>
    </location>
    <ligand>
        <name>Zn(2+)</name>
        <dbReference type="ChEBI" id="CHEBI:29105"/>
        <note>catalytic</note>
    </ligand>
</feature>
<feature type="binding site" evidence="1">
    <location>
        <position position="559"/>
    </location>
    <ligand>
        <name>Zn(2+)</name>
        <dbReference type="ChEBI" id="CHEBI:29105"/>
        <note>catalytic</note>
    </ligand>
</feature>
<feature type="binding site" evidence="1">
    <location>
        <position position="631"/>
    </location>
    <ligand>
        <name>Zn(2+)</name>
        <dbReference type="ChEBI" id="CHEBI:29105"/>
        <note>catalytic</note>
    </ligand>
</feature>
<reference key="1">
    <citation type="journal article" date="2011" name="PLoS ONE">
        <title>The genome of Akkermansia muciniphila, a dedicated intestinal mucin degrader, and its use in exploring intestinal metagenomes.</title>
        <authorList>
            <person name="van Passel M.W."/>
            <person name="Kant R."/>
            <person name="Zoetendal E.G."/>
            <person name="Plugge C.M."/>
            <person name="Derrien M."/>
            <person name="Malfatti S.A."/>
            <person name="Chain P.S."/>
            <person name="Woyke T."/>
            <person name="Palva A."/>
            <person name="de Vos W.M."/>
            <person name="Smidt H."/>
        </authorList>
    </citation>
    <scope>NUCLEOTIDE SEQUENCE [LARGE SCALE GENOMIC DNA]</scope>
    <source>
        <strain>ATCC BAA-835 / DSM 22959 / JCM 33894 / BCRC 81048 / CCUG 64013 / CIP 107961 / Muc</strain>
    </source>
</reference>
<evidence type="ECO:0000255" key="1">
    <source>
        <dbReference type="HAMAP-Rule" id="MF_01458"/>
    </source>
</evidence>
<evidence type="ECO:0000256" key="2">
    <source>
        <dbReference type="SAM" id="MobiDB-lite"/>
    </source>
</evidence>
<comment type="function">
    <text evidence="1">Acts as a processive, ATP-dependent zinc metallopeptidase for both cytoplasmic and membrane proteins. Plays a role in the quality control of integral membrane proteins.</text>
</comment>
<comment type="cofactor">
    <cofactor evidence="1">
        <name>Zn(2+)</name>
        <dbReference type="ChEBI" id="CHEBI:29105"/>
    </cofactor>
    <text evidence="1">Binds 1 zinc ion per subunit.</text>
</comment>
<comment type="subunit">
    <text evidence="1">Homohexamer.</text>
</comment>
<comment type="subcellular location">
    <subcellularLocation>
        <location evidence="1">Cell membrane</location>
        <topology evidence="1">Multi-pass membrane protein</topology>
        <orientation evidence="1">Cytoplasmic side</orientation>
    </subcellularLocation>
</comment>
<comment type="similarity">
    <text evidence="1">In the central section; belongs to the AAA ATPase family.</text>
</comment>
<comment type="similarity">
    <text evidence="1">In the C-terminal section; belongs to the peptidase M41 family.</text>
</comment>
<dbReference type="EC" id="3.4.24.-" evidence="1"/>
<dbReference type="EMBL" id="CP001071">
    <property type="protein sequence ID" value="ACD04187.1"/>
    <property type="molecule type" value="Genomic_DNA"/>
</dbReference>
<dbReference type="RefSeq" id="WP_012419402.1">
    <property type="nucleotide sequence ID" value="NC_010655.1"/>
</dbReference>
<dbReference type="SMR" id="B2UMY1"/>
<dbReference type="STRING" id="349741.Amuc_0348"/>
<dbReference type="MEROPS" id="M41.021"/>
<dbReference type="PaxDb" id="349741-Amuc_0348"/>
<dbReference type="KEGG" id="amu:Amuc_0348"/>
<dbReference type="eggNOG" id="COG0465">
    <property type="taxonomic scope" value="Bacteria"/>
</dbReference>
<dbReference type="HOGENOM" id="CLU_347392_0_0_0"/>
<dbReference type="Proteomes" id="UP000001031">
    <property type="component" value="Chromosome"/>
</dbReference>
<dbReference type="GO" id="GO:0005886">
    <property type="term" value="C:plasma membrane"/>
    <property type="evidence" value="ECO:0007669"/>
    <property type="project" value="UniProtKB-SubCell"/>
</dbReference>
<dbReference type="GO" id="GO:0005524">
    <property type="term" value="F:ATP binding"/>
    <property type="evidence" value="ECO:0007669"/>
    <property type="project" value="UniProtKB-UniRule"/>
</dbReference>
<dbReference type="GO" id="GO:0016887">
    <property type="term" value="F:ATP hydrolysis activity"/>
    <property type="evidence" value="ECO:0007669"/>
    <property type="project" value="UniProtKB-UniRule"/>
</dbReference>
<dbReference type="GO" id="GO:0004176">
    <property type="term" value="F:ATP-dependent peptidase activity"/>
    <property type="evidence" value="ECO:0007669"/>
    <property type="project" value="InterPro"/>
</dbReference>
<dbReference type="GO" id="GO:0004222">
    <property type="term" value="F:metalloendopeptidase activity"/>
    <property type="evidence" value="ECO:0007669"/>
    <property type="project" value="InterPro"/>
</dbReference>
<dbReference type="GO" id="GO:0008270">
    <property type="term" value="F:zinc ion binding"/>
    <property type="evidence" value="ECO:0007669"/>
    <property type="project" value="UniProtKB-UniRule"/>
</dbReference>
<dbReference type="GO" id="GO:0030163">
    <property type="term" value="P:protein catabolic process"/>
    <property type="evidence" value="ECO:0007669"/>
    <property type="project" value="UniProtKB-UniRule"/>
</dbReference>
<dbReference type="GO" id="GO:0006508">
    <property type="term" value="P:proteolysis"/>
    <property type="evidence" value="ECO:0007669"/>
    <property type="project" value="UniProtKB-KW"/>
</dbReference>
<dbReference type="CDD" id="cd19501">
    <property type="entry name" value="RecA-like_FtsH"/>
    <property type="match status" value="1"/>
</dbReference>
<dbReference type="FunFam" id="1.10.8.60:FF:000001">
    <property type="entry name" value="ATP-dependent zinc metalloprotease FtsH"/>
    <property type="match status" value="1"/>
</dbReference>
<dbReference type="FunFam" id="1.20.58.760:FF:000001">
    <property type="entry name" value="ATP-dependent zinc metalloprotease FtsH"/>
    <property type="match status" value="1"/>
</dbReference>
<dbReference type="FunFam" id="3.40.50.300:FF:000001">
    <property type="entry name" value="ATP-dependent zinc metalloprotease FtsH"/>
    <property type="match status" value="1"/>
</dbReference>
<dbReference type="Gene3D" id="1.10.8.60">
    <property type="match status" value="1"/>
</dbReference>
<dbReference type="Gene3D" id="3.40.50.300">
    <property type="entry name" value="P-loop containing nucleotide triphosphate hydrolases"/>
    <property type="match status" value="1"/>
</dbReference>
<dbReference type="Gene3D" id="1.20.58.760">
    <property type="entry name" value="Peptidase M41"/>
    <property type="match status" value="1"/>
</dbReference>
<dbReference type="HAMAP" id="MF_01458">
    <property type="entry name" value="FtsH"/>
    <property type="match status" value="1"/>
</dbReference>
<dbReference type="InterPro" id="IPR003593">
    <property type="entry name" value="AAA+_ATPase"/>
</dbReference>
<dbReference type="InterPro" id="IPR041569">
    <property type="entry name" value="AAA_lid_3"/>
</dbReference>
<dbReference type="InterPro" id="IPR003959">
    <property type="entry name" value="ATPase_AAA_core"/>
</dbReference>
<dbReference type="InterPro" id="IPR003960">
    <property type="entry name" value="ATPase_AAA_CS"/>
</dbReference>
<dbReference type="InterPro" id="IPR005936">
    <property type="entry name" value="FtsH"/>
</dbReference>
<dbReference type="InterPro" id="IPR027417">
    <property type="entry name" value="P-loop_NTPase"/>
</dbReference>
<dbReference type="InterPro" id="IPR000642">
    <property type="entry name" value="Peptidase_M41"/>
</dbReference>
<dbReference type="InterPro" id="IPR037219">
    <property type="entry name" value="Peptidase_M41-like"/>
</dbReference>
<dbReference type="NCBIfam" id="TIGR01241">
    <property type="entry name" value="FtsH_fam"/>
    <property type="match status" value="1"/>
</dbReference>
<dbReference type="PANTHER" id="PTHR23076:SF97">
    <property type="entry name" value="ATP-DEPENDENT ZINC METALLOPROTEASE YME1L1"/>
    <property type="match status" value="1"/>
</dbReference>
<dbReference type="PANTHER" id="PTHR23076">
    <property type="entry name" value="METALLOPROTEASE M41 FTSH"/>
    <property type="match status" value="1"/>
</dbReference>
<dbReference type="Pfam" id="PF00004">
    <property type="entry name" value="AAA"/>
    <property type="match status" value="1"/>
</dbReference>
<dbReference type="Pfam" id="PF17862">
    <property type="entry name" value="AAA_lid_3"/>
    <property type="match status" value="1"/>
</dbReference>
<dbReference type="Pfam" id="PF01434">
    <property type="entry name" value="Peptidase_M41"/>
    <property type="match status" value="1"/>
</dbReference>
<dbReference type="SMART" id="SM00382">
    <property type="entry name" value="AAA"/>
    <property type="match status" value="1"/>
</dbReference>
<dbReference type="SUPFAM" id="SSF140990">
    <property type="entry name" value="FtsH protease domain-like"/>
    <property type="match status" value="1"/>
</dbReference>
<dbReference type="SUPFAM" id="SSF52540">
    <property type="entry name" value="P-loop containing nucleoside triphosphate hydrolases"/>
    <property type="match status" value="1"/>
</dbReference>
<dbReference type="PROSITE" id="PS00674">
    <property type="entry name" value="AAA"/>
    <property type="match status" value="1"/>
</dbReference>
<name>FTSH_AKKM8</name>
<organism>
    <name type="scientific">Akkermansia muciniphila (strain ATCC BAA-835 / DSM 22959 / JCM 33894 / BCRC 81048 / CCUG 64013 / CIP 107961 / Muc)</name>
    <dbReference type="NCBI Taxonomy" id="349741"/>
    <lineage>
        <taxon>Bacteria</taxon>
        <taxon>Pseudomonadati</taxon>
        <taxon>Verrucomicrobiota</taxon>
        <taxon>Verrucomicrobiia</taxon>
        <taxon>Verrucomicrobiales</taxon>
        <taxon>Akkermansiaceae</taxon>
        <taxon>Akkermansia</taxon>
    </lineage>
</organism>